<accession>Q4AA54</accession>
<name>RL19_MESHJ</name>
<protein>
    <recommendedName>
        <fullName evidence="1">Large ribosomal subunit protein bL19</fullName>
    </recommendedName>
    <alternativeName>
        <fullName evidence="2">50S ribosomal protein L19</fullName>
    </alternativeName>
</protein>
<organism>
    <name type="scientific">Mesomycoplasma hyopneumoniae (strain J / ATCC 25934 / NCTC 10110)</name>
    <name type="common">Mycoplasma hyopneumoniae</name>
    <dbReference type="NCBI Taxonomy" id="262719"/>
    <lineage>
        <taxon>Bacteria</taxon>
        <taxon>Bacillati</taxon>
        <taxon>Mycoplasmatota</taxon>
        <taxon>Mycoplasmoidales</taxon>
        <taxon>Metamycoplasmataceae</taxon>
        <taxon>Mesomycoplasma</taxon>
    </lineage>
</organism>
<sequence length="121" mass="14231">MQAKLIEILESSQIRLYPQFQPGDNVRVYFKIQEGNKTRIQIFEGLVIKFKKNGLSSNFVVRKISHNVGVERTFLLHSPLVDKVEVIRSNKVRRAKLYYMKKRSGKSARLKEIKRKELKNL</sequence>
<evidence type="ECO:0000255" key="1">
    <source>
        <dbReference type="HAMAP-Rule" id="MF_00402"/>
    </source>
</evidence>
<evidence type="ECO:0000305" key="2"/>
<feature type="chain" id="PRO_0000226854" description="Large ribosomal subunit protein bL19">
    <location>
        <begin position="1"/>
        <end position="121"/>
    </location>
</feature>
<keyword id="KW-0687">Ribonucleoprotein</keyword>
<keyword id="KW-0689">Ribosomal protein</keyword>
<comment type="function">
    <text evidence="1">This protein is located at the 30S-50S ribosomal subunit interface and may play a role in the structure and function of the aminoacyl-tRNA binding site.</text>
</comment>
<comment type="similarity">
    <text evidence="1">Belongs to the bacterial ribosomal protein bL19 family.</text>
</comment>
<dbReference type="EMBL" id="AE017243">
    <property type="protein sequence ID" value="AAZ44367.1"/>
    <property type="molecule type" value="Genomic_DNA"/>
</dbReference>
<dbReference type="RefSeq" id="WP_011284055.1">
    <property type="nucleotide sequence ID" value="NC_007295.1"/>
</dbReference>
<dbReference type="SMR" id="Q4AA54"/>
<dbReference type="GeneID" id="41334587"/>
<dbReference type="KEGG" id="mhj:MHJ_0276"/>
<dbReference type="eggNOG" id="COG0335">
    <property type="taxonomic scope" value="Bacteria"/>
</dbReference>
<dbReference type="HOGENOM" id="CLU_103507_2_2_14"/>
<dbReference type="OrthoDB" id="9803541at2"/>
<dbReference type="Proteomes" id="UP000000548">
    <property type="component" value="Chromosome"/>
</dbReference>
<dbReference type="GO" id="GO:0022625">
    <property type="term" value="C:cytosolic large ribosomal subunit"/>
    <property type="evidence" value="ECO:0007669"/>
    <property type="project" value="TreeGrafter"/>
</dbReference>
<dbReference type="GO" id="GO:0003735">
    <property type="term" value="F:structural constituent of ribosome"/>
    <property type="evidence" value="ECO:0007669"/>
    <property type="project" value="InterPro"/>
</dbReference>
<dbReference type="GO" id="GO:0006412">
    <property type="term" value="P:translation"/>
    <property type="evidence" value="ECO:0007669"/>
    <property type="project" value="UniProtKB-UniRule"/>
</dbReference>
<dbReference type="Gene3D" id="2.30.30.790">
    <property type="match status" value="1"/>
</dbReference>
<dbReference type="HAMAP" id="MF_00402">
    <property type="entry name" value="Ribosomal_bL19"/>
    <property type="match status" value="1"/>
</dbReference>
<dbReference type="InterPro" id="IPR001857">
    <property type="entry name" value="Ribosomal_bL19"/>
</dbReference>
<dbReference type="InterPro" id="IPR018257">
    <property type="entry name" value="Ribosomal_bL19_CS"/>
</dbReference>
<dbReference type="InterPro" id="IPR038657">
    <property type="entry name" value="Ribosomal_bL19_sf"/>
</dbReference>
<dbReference type="InterPro" id="IPR008991">
    <property type="entry name" value="Translation_prot_SH3-like_sf"/>
</dbReference>
<dbReference type="NCBIfam" id="TIGR01024">
    <property type="entry name" value="rplS_bact"/>
    <property type="match status" value="1"/>
</dbReference>
<dbReference type="PANTHER" id="PTHR15680:SF9">
    <property type="entry name" value="LARGE RIBOSOMAL SUBUNIT PROTEIN BL19M"/>
    <property type="match status" value="1"/>
</dbReference>
<dbReference type="PANTHER" id="PTHR15680">
    <property type="entry name" value="RIBOSOMAL PROTEIN L19"/>
    <property type="match status" value="1"/>
</dbReference>
<dbReference type="Pfam" id="PF01245">
    <property type="entry name" value="Ribosomal_L19"/>
    <property type="match status" value="1"/>
</dbReference>
<dbReference type="PIRSF" id="PIRSF002191">
    <property type="entry name" value="Ribosomal_L19"/>
    <property type="match status" value="1"/>
</dbReference>
<dbReference type="PRINTS" id="PR00061">
    <property type="entry name" value="RIBOSOMALL19"/>
</dbReference>
<dbReference type="SUPFAM" id="SSF50104">
    <property type="entry name" value="Translation proteins SH3-like domain"/>
    <property type="match status" value="1"/>
</dbReference>
<dbReference type="PROSITE" id="PS01015">
    <property type="entry name" value="RIBOSOMAL_L19"/>
    <property type="match status" value="1"/>
</dbReference>
<gene>
    <name evidence="1" type="primary">rplS</name>
    <name type="ordered locus">MHJ_0276</name>
</gene>
<reference key="1">
    <citation type="journal article" date="2005" name="J. Bacteriol.">
        <title>Swine and poultry pathogens: the complete genome sequences of two strains of Mycoplasma hyopneumoniae and a strain of Mycoplasma synoviae.</title>
        <authorList>
            <person name="Vasconcelos A.T.R."/>
            <person name="Ferreira H.B."/>
            <person name="Bizarro C.V."/>
            <person name="Bonatto S.L."/>
            <person name="Carvalho M.O."/>
            <person name="Pinto P.M."/>
            <person name="Almeida D.F."/>
            <person name="Almeida L.G.P."/>
            <person name="Almeida R."/>
            <person name="Alves-Junior L."/>
            <person name="Assuncao E.N."/>
            <person name="Azevedo V.A.C."/>
            <person name="Bogo M.R."/>
            <person name="Brigido M.M."/>
            <person name="Brocchi M."/>
            <person name="Burity H.A."/>
            <person name="Camargo A.A."/>
            <person name="Camargo S.S."/>
            <person name="Carepo M.S."/>
            <person name="Carraro D.M."/>
            <person name="de Mattos Cascardo J.C."/>
            <person name="Castro L.A."/>
            <person name="Cavalcanti G."/>
            <person name="Chemale G."/>
            <person name="Collevatti R.G."/>
            <person name="Cunha C.W."/>
            <person name="Dallagiovanna B."/>
            <person name="Dambros B.P."/>
            <person name="Dellagostin O.A."/>
            <person name="Falcao C."/>
            <person name="Fantinatti-Garboggini F."/>
            <person name="Felipe M.S.S."/>
            <person name="Fiorentin L."/>
            <person name="Franco G.R."/>
            <person name="Freitas N.S.A."/>
            <person name="Frias D."/>
            <person name="Grangeiro T.B."/>
            <person name="Grisard E.C."/>
            <person name="Guimaraes C.T."/>
            <person name="Hungria M."/>
            <person name="Jardim S.N."/>
            <person name="Krieger M.A."/>
            <person name="Laurino J.P."/>
            <person name="Lima L.F.A."/>
            <person name="Lopes M.I."/>
            <person name="Loreto E.L.S."/>
            <person name="Madeira H.M.F."/>
            <person name="Manfio G.P."/>
            <person name="Maranhao A.Q."/>
            <person name="Martinkovics C.T."/>
            <person name="Medeiros S.R.B."/>
            <person name="Moreira M.A.M."/>
            <person name="Neiva M."/>
            <person name="Ramalho-Neto C.E."/>
            <person name="Nicolas M.F."/>
            <person name="Oliveira S.C."/>
            <person name="Paixao R.F.C."/>
            <person name="Pedrosa F.O."/>
            <person name="Pena S.D.J."/>
            <person name="Pereira M."/>
            <person name="Pereira-Ferrari L."/>
            <person name="Piffer I."/>
            <person name="Pinto L.S."/>
            <person name="Potrich D.P."/>
            <person name="Salim A.C.M."/>
            <person name="Santos F.R."/>
            <person name="Schmitt R."/>
            <person name="Schneider M.P.C."/>
            <person name="Schrank A."/>
            <person name="Schrank I.S."/>
            <person name="Schuck A.F."/>
            <person name="Seuanez H.N."/>
            <person name="Silva D.W."/>
            <person name="Silva R."/>
            <person name="Silva S.C."/>
            <person name="Soares C.M.A."/>
            <person name="Souza K.R.L."/>
            <person name="Souza R.C."/>
            <person name="Staats C.C."/>
            <person name="Steffens M.B.R."/>
            <person name="Teixeira S.M.R."/>
            <person name="Urmenyi T.P."/>
            <person name="Vainstein M.H."/>
            <person name="Zuccherato L.W."/>
            <person name="Simpson A.J.G."/>
            <person name="Zaha A."/>
        </authorList>
    </citation>
    <scope>NUCLEOTIDE SEQUENCE [LARGE SCALE GENOMIC DNA]</scope>
    <source>
        <strain>J / ATCC 25934 / NCTC 10110</strain>
    </source>
</reference>
<proteinExistence type="inferred from homology"/>